<organism>
    <name type="scientific">Arthroderma benhamiae (strain ATCC MYA-4681 / CBS 112371)</name>
    <name type="common">Trichophyton mentagrophytes</name>
    <dbReference type="NCBI Taxonomy" id="663331"/>
    <lineage>
        <taxon>Eukaryota</taxon>
        <taxon>Fungi</taxon>
        <taxon>Dikarya</taxon>
        <taxon>Ascomycota</taxon>
        <taxon>Pezizomycotina</taxon>
        <taxon>Eurotiomycetes</taxon>
        <taxon>Eurotiomycetidae</taxon>
        <taxon>Onygenales</taxon>
        <taxon>Arthrodermataceae</taxon>
        <taxon>Trichophyton</taxon>
    </lineage>
</organism>
<protein>
    <recommendedName>
        <fullName>Probable extracellular metalloproteinase 4</fullName>
        <ecNumber>3.4.24.-</ecNumber>
    </recommendedName>
    <alternativeName>
        <fullName>Fungalysin MEP4</fullName>
    </alternativeName>
</protein>
<accession>D4AX35</accession>
<sequence>MHGLLLAGLLALPLNVLAHPTESHSSGVSRRAIDITSYRLPQISKYTKSDAVPKQDGESFTTSSTGDDNVSSGDYVTTATNWLKKTLPKATYRLVNDHYIGDSGIGHVHFRQTAHGIDIDNTDFNVNIGRDGKVFSFGNSFYDGEIPKANPMVKRDFSDPVNALHGAIQTLNLPVTAKPENVKAKPVEGKENFKFEGTSGALSDPKAQLVYLQKDGGLVLSWKVETDVGDNWLLTYVDANKNDQVHSVVDYVSAAEYQVYPWGINDPTEGNRTSIHLPWLKTLSTDWHIDGKGWYPTTRGNNAIAQENPTGHPEYENNYRPKSPLFIFKYPYSLAMTPPSSYRDASITQLFYTTNVYHDVLYILGFNEKAGNFQINNWNKGGVGGDFAILNSQDGSGVNNANFATPPDGQPGRMRMYTWNASTPERDGCFEAGIVIHEYTHGVSNRLTGGPENSRCLAALESGGMGEGWSDFFATAIRLKPGDTRATDYTMGEWASNRPNGIRKYRYSTSLTTNPHMYVDADGLTSVHAIGTIWASMLYELLWNLIDKHGKGDVTKIRPVLKNGVPTDGRHLAMKIVLDGMALQPCLPNFVQARDAILDADKNLTQGSNKCEIWKAFAKRGLGVGAAFNQTKRTGSNELPAGC</sequence>
<evidence type="ECO:0000250" key="1"/>
<evidence type="ECO:0000255" key="2"/>
<evidence type="ECO:0000255" key="3">
    <source>
        <dbReference type="PROSITE-ProRule" id="PRU10095"/>
    </source>
</evidence>
<evidence type="ECO:0000256" key="4">
    <source>
        <dbReference type="SAM" id="MobiDB-lite"/>
    </source>
</evidence>
<evidence type="ECO:0000269" key="5">
    <source>
    </source>
</evidence>
<evidence type="ECO:0000305" key="6"/>
<name>MEP4_ARTBC</name>
<keyword id="KW-0325">Glycoprotein</keyword>
<keyword id="KW-0378">Hydrolase</keyword>
<keyword id="KW-0479">Metal-binding</keyword>
<keyword id="KW-0482">Metalloprotease</keyword>
<keyword id="KW-0645">Protease</keyword>
<keyword id="KW-1185">Reference proteome</keyword>
<keyword id="KW-0964">Secreted</keyword>
<keyword id="KW-0732">Signal</keyword>
<keyword id="KW-0843">Virulence</keyword>
<keyword id="KW-0862">Zinc</keyword>
<keyword id="KW-0865">Zymogen</keyword>
<gene>
    <name type="primary">MEP4</name>
    <name type="ORF">ARB_00762</name>
</gene>
<dbReference type="EC" id="3.4.24.-"/>
<dbReference type="EMBL" id="ABSU01000016">
    <property type="protein sequence ID" value="EFE32240.1"/>
    <property type="molecule type" value="Genomic_DNA"/>
</dbReference>
<dbReference type="RefSeq" id="XP_003012880.1">
    <property type="nucleotide sequence ID" value="XM_003012834.1"/>
</dbReference>
<dbReference type="SMR" id="D4AX35"/>
<dbReference type="MEROPS" id="M36.001"/>
<dbReference type="GlyCosmos" id="D4AX35">
    <property type="glycosylation" value="4 sites, No reported glycans"/>
</dbReference>
<dbReference type="GeneID" id="9522958"/>
<dbReference type="KEGG" id="abe:ARB_00762"/>
<dbReference type="eggNOG" id="ENOG502QTDC">
    <property type="taxonomic scope" value="Eukaryota"/>
</dbReference>
<dbReference type="HOGENOM" id="CLU_012703_3_0_1"/>
<dbReference type="OMA" id="SKFATHR"/>
<dbReference type="OrthoDB" id="3227768at2759"/>
<dbReference type="Proteomes" id="UP000008866">
    <property type="component" value="Unassembled WGS sequence"/>
</dbReference>
<dbReference type="GO" id="GO:0005576">
    <property type="term" value="C:extracellular region"/>
    <property type="evidence" value="ECO:0007669"/>
    <property type="project" value="UniProtKB-SubCell"/>
</dbReference>
<dbReference type="GO" id="GO:0004222">
    <property type="term" value="F:metalloendopeptidase activity"/>
    <property type="evidence" value="ECO:0007669"/>
    <property type="project" value="InterPro"/>
</dbReference>
<dbReference type="GO" id="GO:0008270">
    <property type="term" value="F:zinc ion binding"/>
    <property type="evidence" value="ECO:0007669"/>
    <property type="project" value="InterPro"/>
</dbReference>
<dbReference type="GO" id="GO:0006508">
    <property type="term" value="P:proteolysis"/>
    <property type="evidence" value="ECO:0007669"/>
    <property type="project" value="UniProtKB-KW"/>
</dbReference>
<dbReference type="CDD" id="cd09596">
    <property type="entry name" value="M36"/>
    <property type="match status" value="1"/>
</dbReference>
<dbReference type="Gene3D" id="3.10.170.10">
    <property type="match status" value="1"/>
</dbReference>
<dbReference type="Gene3D" id="1.10.390.10">
    <property type="entry name" value="Neutral Protease Domain 2"/>
    <property type="match status" value="1"/>
</dbReference>
<dbReference type="InterPro" id="IPR011096">
    <property type="entry name" value="FTP_domain"/>
</dbReference>
<dbReference type="InterPro" id="IPR050371">
    <property type="entry name" value="Fungal_virulence_M36"/>
</dbReference>
<dbReference type="InterPro" id="IPR001842">
    <property type="entry name" value="Peptidase_M36"/>
</dbReference>
<dbReference type="InterPro" id="IPR027268">
    <property type="entry name" value="Peptidase_M4/M1_CTD_sf"/>
</dbReference>
<dbReference type="PANTHER" id="PTHR33478">
    <property type="entry name" value="EXTRACELLULAR METALLOPROTEINASE MEP"/>
    <property type="match status" value="1"/>
</dbReference>
<dbReference type="PANTHER" id="PTHR33478:SF1">
    <property type="entry name" value="EXTRACELLULAR METALLOPROTEINASE MEP"/>
    <property type="match status" value="1"/>
</dbReference>
<dbReference type="Pfam" id="PF07504">
    <property type="entry name" value="FTP"/>
    <property type="match status" value="1"/>
</dbReference>
<dbReference type="Pfam" id="PF02128">
    <property type="entry name" value="Peptidase_M36"/>
    <property type="match status" value="1"/>
</dbReference>
<dbReference type="PRINTS" id="PR00999">
    <property type="entry name" value="FUNGALYSIN"/>
</dbReference>
<dbReference type="SUPFAM" id="SSF55486">
    <property type="entry name" value="Metalloproteases ('zincins'), catalytic domain"/>
    <property type="match status" value="1"/>
</dbReference>
<dbReference type="PROSITE" id="PS00142">
    <property type="entry name" value="ZINC_PROTEASE"/>
    <property type="match status" value="1"/>
</dbReference>
<reference key="1">
    <citation type="journal article" date="2011" name="Genome Biol.">
        <title>Comparative and functional genomics provide insights into the pathogenicity of dermatophytic fungi.</title>
        <authorList>
            <person name="Burmester A."/>
            <person name="Shelest E."/>
            <person name="Gloeckner G."/>
            <person name="Heddergott C."/>
            <person name="Schindler S."/>
            <person name="Staib P."/>
            <person name="Heidel A."/>
            <person name="Felder M."/>
            <person name="Petzold A."/>
            <person name="Szafranski K."/>
            <person name="Feuermann M."/>
            <person name="Pedruzzi I."/>
            <person name="Priebe S."/>
            <person name="Groth M."/>
            <person name="Winkler R."/>
            <person name="Li W."/>
            <person name="Kniemeyer O."/>
            <person name="Schroeckh V."/>
            <person name="Hertweck C."/>
            <person name="Hube B."/>
            <person name="White T.C."/>
            <person name="Platzer M."/>
            <person name="Guthke R."/>
            <person name="Heitman J."/>
            <person name="Woestemeyer J."/>
            <person name="Zipfel P.F."/>
            <person name="Monod M."/>
            <person name="Brakhage A.A."/>
        </authorList>
    </citation>
    <scope>NUCLEOTIDE SEQUENCE [LARGE SCALE GENOMIC DNA]</scope>
    <scope>IDENTIFICATION BY MASS SPECTROMETRY</scope>
    <scope>SUBCELLULAR LOCATION</scope>
    <source>
        <strain>ATCC MYA-4681 / CBS 112371</strain>
    </source>
</reference>
<comment type="function">
    <text evidence="1">Secreted metalloproteinase probably acting as a virulence factor.</text>
</comment>
<comment type="cofactor">
    <cofactor evidence="1">
        <name>Zn(2+)</name>
        <dbReference type="ChEBI" id="CHEBI:29105"/>
    </cofactor>
    <text evidence="1">Binds 1 zinc ion per subunit.</text>
</comment>
<comment type="subcellular location">
    <subcellularLocation>
        <location evidence="5">Secreted</location>
    </subcellularLocation>
</comment>
<comment type="similarity">
    <text evidence="6">Belongs to the peptidase M36 family.</text>
</comment>
<proteinExistence type="evidence at protein level"/>
<feature type="signal peptide" evidence="2">
    <location>
        <begin position="1"/>
        <end position="18"/>
    </location>
</feature>
<feature type="propeptide" id="PRO_0000397734" evidence="1">
    <location>
        <begin position="19"/>
        <end position="254"/>
    </location>
</feature>
<feature type="chain" id="PRO_0000397735" description="Probable extracellular metalloproteinase 4">
    <location>
        <begin position="255"/>
        <end position="643"/>
    </location>
</feature>
<feature type="region of interest" description="Disordered" evidence="4">
    <location>
        <begin position="47"/>
        <end position="69"/>
    </location>
</feature>
<feature type="compositionally biased region" description="Basic and acidic residues" evidence="4">
    <location>
        <begin position="47"/>
        <end position="57"/>
    </location>
</feature>
<feature type="compositionally biased region" description="Polar residues" evidence="4">
    <location>
        <begin position="58"/>
        <end position="69"/>
    </location>
</feature>
<feature type="active site" evidence="3">
    <location>
        <position position="438"/>
    </location>
</feature>
<feature type="binding site" evidence="3">
    <location>
        <position position="437"/>
    </location>
    <ligand>
        <name>Zn(2+)</name>
        <dbReference type="ChEBI" id="CHEBI:29105"/>
        <note>catalytic</note>
    </ligand>
</feature>
<feature type="binding site" evidence="3">
    <location>
        <position position="441"/>
    </location>
    <ligand>
        <name>Zn(2+)</name>
        <dbReference type="ChEBI" id="CHEBI:29105"/>
        <note>catalytic</note>
    </ligand>
</feature>
<feature type="glycosylation site" description="N-linked (GlcNAc...) asparagine" evidence="2">
    <location>
        <position position="271"/>
    </location>
</feature>
<feature type="glycosylation site" description="N-linked (GlcNAc...) asparagine" evidence="2">
    <location>
        <position position="420"/>
    </location>
</feature>
<feature type="glycosylation site" description="N-linked (GlcNAc...) asparagine" evidence="2">
    <location>
        <position position="603"/>
    </location>
</feature>
<feature type="glycosylation site" description="N-linked (GlcNAc...) asparagine" evidence="2">
    <location>
        <position position="629"/>
    </location>
</feature>